<accession>P96628</accession>
<keyword id="KW-0963">Cytoplasm</keyword>
<keyword id="KW-0479">Metal-binding</keyword>
<keyword id="KW-1185">Reference proteome</keyword>
<keyword id="KW-0862">Zinc</keyword>
<evidence type="ECO:0000255" key="1">
    <source>
        <dbReference type="HAMAP-Rule" id="MF_00745"/>
    </source>
</evidence>
<name>SPRTL_BACSU</name>
<reference key="1">
    <citation type="submission" date="1997-03" db="EMBL/GenBank/DDBJ databases">
        <title>A 148 kbp sequence of the region between 35 and 47 degree of the Bacillus subtilis genome.</title>
        <authorList>
            <person name="Kasahara Y."/>
            <person name="Nakai S."/>
            <person name="Lee S."/>
            <person name="Sadaie Y."/>
            <person name="Ogasawara N."/>
        </authorList>
    </citation>
    <scope>NUCLEOTIDE SEQUENCE [GENOMIC DNA]</scope>
    <source>
        <strain>168</strain>
    </source>
</reference>
<reference key="2">
    <citation type="journal article" date="1997" name="Nature">
        <title>The complete genome sequence of the Gram-positive bacterium Bacillus subtilis.</title>
        <authorList>
            <person name="Kunst F."/>
            <person name="Ogasawara N."/>
            <person name="Moszer I."/>
            <person name="Albertini A.M."/>
            <person name="Alloni G."/>
            <person name="Azevedo V."/>
            <person name="Bertero M.G."/>
            <person name="Bessieres P."/>
            <person name="Bolotin A."/>
            <person name="Borchert S."/>
            <person name="Borriss R."/>
            <person name="Boursier L."/>
            <person name="Brans A."/>
            <person name="Braun M."/>
            <person name="Brignell S.C."/>
            <person name="Bron S."/>
            <person name="Brouillet S."/>
            <person name="Bruschi C.V."/>
            <person name="Caldwell B."/>
            <person name="Capuano V."/>
            <person name="Carter N.M."/>
            <person name="Choi S.-K."/>
            <person name="Codani J.-J."/>
            <person name="Connerton I.F."/>
            <person name="Cummings N.J."/>
            <person name="Daniel R.A."/>
            <person name="Denizot F."/>
            <person name="Devine K.M."/>
            <person name="Duesterhoeft A."/>
            <person name="Ehrlich S.D."/>
            <person name="Emmerson P.T."/>
            <person name="Entian K.-D."/>
            <person name="Errington J."/>
            <person name="Fabret C."/>
            <person name="Ferrari E."/>
            <person name="Foulger D."/>
            <person name="Fritz C."/>
            <person name="Fujita M."/>
            <person name="Fujita Y."/>
            <person name="Fuma S."/>
            <person name="Galizzi A."/>
            <person name="Galleron N."/>
            <person name="Ghim S.-Y."/>
            <person name="Glaser P."/>
            <person name="Goffeau A."/>
            <person name="Golightly E.J."/>
            <person name="Grandi G."/>
            <person name="Guiseppi G."/>
            <person name="Guy B.J."/>
            <person name="Haga K."/>
            <person name="Haiech J."/>
            <person name="Harwood C.R."/>
            <person name="Henaut A."/>
            <person name="Hilbert H."/>
            <person name="Holsappel S."/>
            <person name="Hosono S."/>
            <person name="Hullo M.-F."/>
            <person name="Itaya M."/>
            <person name="Jones L.-M."/>
            <person name="Joris B."/>
            <person name="Karamata D."/>
            <person name="Kasahara Y."/>
            <person name="Klaerr-Blanchard M."/>
            <person name="Klein C."/>
            <person name="Kobayashi Y."/>
            <person name="Koetter P."/>
            <person name="Koningstein G."/>
            <person name="Krogh S."/>
            <person name="Kumano M."/>
            <person name="Kurita K."/>
            <person name="Lapidus A."/>
            <person name="Lardinois S."/>
            <person name="Lauber J."/>
            <person name="Lazarevic V."/>
            <person name="Lee S.-M."/>
            <person name="Levine A."/>
            <person name="Liu H."/>
            <person name="Masuda S."/>
            <person name="Mauel C."/>
            <person name="Medigue C."/>
            <person name="Medina N."/>
            <person name="Mellado R.P."/>
            <person name="Mizuno M."/>
            <person name="Moestl D."/>
            <person name="Nakai S."/>
            <person name="Noback M."/>
            <person name="Noone D."/>
            <person name="O'Reilly M."/>
            <person name="Ogawa K."/>
            <person name="Ogiwara A."/>
            <person name="Oudega B."/>
            <person name="Park S.-H."/>
            <person name="Parro V."/>
            <person name="Pohl T.M."/>
            <person name="Portetelle D."/>
            <person name="Porwollik S."/>
            <person name="Prescott A.M."/>
            <person name="Presecan E."/>
            <person name="Pujic P."/>
            <person name="Purnelle B."/>
            <person name="Rapoport G."/>
            <person name="Rey M."/>
            <person name="Reynolds S."/>
            <person name="Rieger M."/>
            <person name="Rivolta C."/>
            <person name="Rocha E."/>
            <person name="Roche B."/>
            <person name="Rose M."/>
            <person name="Sadaie Y."/>
            <person name="Sato T."/>
            <person name="Scanlan E."/>
            <person name="Schleich S."/>
            <person name="Schroeter R."/>
            <person name="Scoffone F."/>
            <person name="Sekiguchi J."/>
            <person name="Sekowska A."/>
            <person name="Seror S.J."/>
            <person name="Serror P."/>
            <person name="Shin B.-S."/>
            <person name="Soldo B."/>
            <person name="Sorokin A."/>
            <person name="Tacconi E."/>
            <person name="Takagi T."/>
            <person name="Takahashi H."/>
            <person name="Takemaru K."/>
            <person name="Takeuchi M."/>
            <person name="Tamakoshi A."/>
            <person name="Tanaka T."/>
            <person name="Terpstra P."/>
            <person name="Tognoni A."/>
            <person name="Tosato V."/>
            <person name="Uchiyama S."/>
            <person name="Vandenbol M."/>
            <person name="Vannier F."/>
            <person name="Vassarotti A."/>
            <person name="Viari A."/>
            <person name="Wambutt R."/>
            <person name="Wedler E."/>
            <person name="Wedler H."/>
            <person name="Weitzenegger T."/>
            <person name="Winters P."/>
            <person name="Wipat A."/>
            <person name="Yamamoto H."/>
            <person name="Yamane K."/>
            <person name="Yasumoto K."/>
            <person name="Yata K."/>
            <person name="Yoshida K."/>
            <person name="Yoshikawa H.-F."/>
            <person name="Zumstein E."/>
            <person name="Yoshikawa H."/>
            <person name="Danchin A."/>
        </authorList>
    </citation>
    <scope>NUCLEOTIDE SEQUENCE [LARGE SCALE GENOMIC DNA]</scope>
    <source>
        <strain>168</strain>
    </source>
</reference>
<organism>
    <name type="scientific">Bacillus subtilis (strain 168)</name>
    <dbReference type="NCBI Taxonomy" id="224308"/>
    <lineage>
        <taxon>Bacteria</taxon>
        <taxon>Bacillati</taxon>
        <taxon>Bacillota</taxon>
        <taxon>Bacilli</taxon>
        <taxon>Bacillales</taxon>
        <taxon>Bacillaceae</taxon>
        <taxon>Bacillus</taxon>
    </lineage>
</organism>
<protein>
    <recommendedName>
        <fullName evidence="1">Protein SprT-like</fullName>
    </recommendedName>
</protein>
<feature type="chain" id="PRO_0000213288" description="Protein SprT-like">
    <location>
        <begin position="1"/>
        <end position="150"/>
    </location>
</feature>
<feature type="domain" description="SprT-like" evidence="1">
    <location>
        <begin position="6"/>
        <end position="147"/>
    </location>
</feature>
<feature type="active site" evidence="1">
    <location>
        <position position="68"/>
    </location>
</feature>
<feature type="binding site" evidence="1">
    <location>
        <position position="67"/>
    </location>
    <ligand>
        <name>Zn(2+)</name>
        <dbReference type="ChEBI" id="CHEBI:29105"/>
    </ligand>
</feature>
<feature type="binding site" evidence="1">
    <location>
        <position position="71"/>
    </location>
    <ligand>
        <name>Zn(2+)</name>
        <dbReference type="ChEBI" id="CHEBI:29105"/>
    </ligand>
</feature>
<gene>
    <name type="primary">ydcK</name>
    <name type="ordered locus">BSU04790</name>
</gene>
<sequence>MDNKELQKLTEDISETYFKKPFRHQALFNDRLKTTGGRYLLTSHNIELNRKYLIEHGREELIGIIKHELCHYHLHLEGKGYKHRDRDFRMLLQQVNAPRFCTPLKKKAENKKTYMYICTTCGQQYIKKRAMNPDRYRCGKCRGKIKRIFS</sequence>
<comment type="cofactor">
    <cofactor evidence="1">
        <name>Zn(2+)</name>
        <dbReference type="ChEBI" id="CHEBI:29105"/>
    </cofactor>
    <text evidence="1">Binds 1 zinc ion.</text>
</comment>
<comment type="subcellular location">
    <subcellularLocation>
        <location evidence="1">Cytoplasm</location>
    </subcellularLocation>
</comment>
<comment type="similarity">
    <text evidence="1">Belongs to the SprT family.</text>
</comment>
<dbReference type="EMBL" id="AB001488">
    <property type="protein sequence ID" value="BAA19317.1"/>
    <property type="molecule type" value="Genomic_DNA"/>
</dbReference>
<dbReference type="EMBL" id="AL009126">
    <property type="protein sequence ID" value="CAB12286.1"/>
    <property type="molecule type" value="Genomic_DNA"/>
</dbReference>
<dbReference type="PIR" id="H69773">
    <property type="entry name" value="H69773"/>
</dbReference>
<dbReference type="RefSeq" id="NP_388360.1">
    <property type="nucleotide sequence ID" value="NC_000964.3"/>
</dbReference>
<dbReference type="RefSeq" id="WP_003246525.1">
    <property type="nucleotide sequence ID" value="NZ_OZ025638.1"/>
</dbReference>
<dbReference type="FunCoup" id="P96628">
    <property type="interactions" value="23"/>
</dbReference>
<dbReference type="STRING" id="224308.BSU04790"/>
<dbReference type="PaxDb" id="224308-BSU04790"/>
<dbReference type="EnsemblBacteria" id="CAB12286">
    <property type="protein sequence ID" value="CAB12286"/>
    <property type="gene ID" value="BSU_04790"/>
</dbReference>
<dbReference type="GeneID" id="938154"/>
<dbReference type="KEGG" id="bsu:BSU04790"/>
<dbReference type="PATRIC" id="fig|224308.179.peg.509"/>
<dbReference type="eggNOG" id="COG3091">
    <property type="taxonomic scope" value="Bacteria"/>
</dbReference>
<dbReference type="InParanoid" id="P96628"/>
<dbReference type="OrthoDB" id="9799909at2"/>
<dbReference type="PhylomeDB" id="P96628"/>
<dbReference type="BioCyc" id="BSUB:BSU04790-MONOMER"/>
<dbReference type="Proteomes" id="UP000001570">
    <property type="component" value="Chromosome"/>
</dbReference>
<dbReference type="GO" id="GO:0005737">
    <property type="term" value="C:cytoplasm"/>
    <property type="evidence" value="ECO:0007669"/>
    <property type="project" value="UniProtKB-SubCell"/>
</dbReference>
<dbReference type="GO" id="GO:0008270">
    <property type="term" value="F:zinc ion binding"/>
    <property type="evidence" value="ECO:0007669"/>
    <property type="project" value="UniProtKB-UniRule"/>
</dbReference>
<dbReference type="GO" id="GO:0006950">
    <property type="term" value="P:response to stress"/>
    <property type="evidence" value="ECO:0007669"/>
    <property type="project" value="UniProtKB-ARBA"/>
</dbReference>
<dbReference type="HAMAP" id="MF_00745">
    <property type="entry name" value="SprT_like"/>
    <property type="match status" value="1"/>
</dbReference>
<dbReference type="InterPro" id="IPR006640">
    <property type="entry name" value="SprT-like_domain"/>
</dbReference>
<dbReference type="InterPro" id="IPR035240">
    <property type="entry name" value="SprT_Zn_ribbon"/>
</dbReference>
<dbReference type="InterPro" id="IPR023524">
    <property type="entry name" value="Uncharacterised_SprT-like"/>
</dbReference>
<dbReference type="NCBIfam" id="NF003339">
    <property type="entry name" value="PRK04351.1"/>
    <property type="match status" value="1"/>
</dbReference>
<dbReference type="Pfam" id="PF10263">
    <property type="entry name" value="SprT-like"/>
    <property type="match status" value="1"/>
</dbReference>
<dbReference type="Pfam" id="PF17283">
    <property type="entry name" value="Zn_ribbon_SprT"/>
    <property type="match status" value="1"/>
</dbReference>
<dbReference type="SMART" id="SM00731">
    <property type="entry name" value="SprT"/>
    <property type="match status" value="1"/>
</dbReference>
<proteinExistence type="inferred from homology"/>